<gene>
    <name type="primary">ZNF397</name>
    <name type="synonym">ZNF47</name>
    <name type="synonym">ZSCAN15</name>
</gene>
<reference key="1">
    <citation type="journal article" date="2003" name="Gene">
        <title>Identification and characterization of two novel human SCAN domain-containing zinc finger genes ZNF396 and ZNF397.</title>
        <authorList>
            <person name="Wu Y."/>
            <person name="Yu L."/>
            <person name="Bi G."/>
            <person name="Luo K."/>
            <person name="Zhou G."/>
            <person name="Zhao S."/>
        </authorList>
    </citation>
    <scope>NUCLEOTIDE SEQUENCE [MRNA] (ISOFORMS 1 AND 3)</scope>
    <scope>FUNCTION</scope>
    <scope>SUBUNIT</scope>
    <scope>SUBCELLULAR LOCATION</scope>
    <scope>TISSUE SPECIFICITY</scope>
    <source>
        <tissue>Hepatoma</tissue>
    </source>
</reference>
<reference key="2">
    <citation type="journal article" date="2004" name="Genome Res.">
        <title>The status, quality, and expansion of the NIH full-length cDNA project: the Mammalian Gene Collection (MGC).</title>
        <authorList>
            <consortium name="The MGC Project Team"/>
        </authorList>
    </citation>
    <scope>NUCLEOTIDE SEQUENCE [LARGE SCALE MRNA] (ISOFORM 2)</scope>
    <source>
        <tissue>Uterus</tissue>
    </source>
</reference>
<reference key="3">
    <citation type="journal article" date="2013" name="J. Proteome Res.">
        <title>Toward a comprehensive characterization of a human cancer cell phosphoproteome.</title>
        <authorList>
            <person name="Zhou H."/>
            <person name="Di Palma S."/>
            <person name="Preisinger C."/>
            <person name="Peng M."/>
            <person name="Polat A.N."/>
            <person name="Heck A.J."/>
            <person name="Mohammed S."/>
        </authorList>
    </citation>
    <scope>PHOSPHORYLATION [LARGE SCALE ANALYSIS] AT SER-31</scope>
    <scope>IDENTIFICATION BY MASS SPECTROMETRY [LARGE SCALE ANALYSIS]</scope>
    <source>
        <tissue>Erythroleukemia</tissue>
    </source>
</reference>
<reference key="4">
    <citation type="journal article" date="2015" name="Mol. Cell. Proteomics">
        <title>System-wide analysis of SUMOylation dynamics in response to replication stress reveals novel small ubiquitin-like modified target proteins and acceptor lysines relevant for genome stability.</title>
        <authorList>
            <person name="Xiao Z."/>
            <person name="Chang J.G."/>
            <person name="Hendriks I.A."/>
            <person name="Sigurdsson J.O."/>
            <person name="Olsen J.V."/>
            <person name="Vertegaal A.C."/>
        </authorList>
    </citation>
    <scope>SUMOYLATION [LARGE SCALE ANALYSIS] AT LYS-171</scope>
    <scope>IDENTIFICATION BY MASS SPECTROMETRY [LARGE SCALE ANALYSIS]</scope>
</reference>
<reference key="5">
    <citation type="journal article" date="2017" name="Nat. Struct. Mol. Biol.">
        <title>Site-specific mapping of the human SUMO proteome reveals co-modification with phosphorylation.</title>
        <authorList>
            <person name="Hendriks I.A."/>
            <person name="Lyon D."/>
            <person name="Young C."/>
            <person name="Jensen L.J."/>
            <person name="Vertegaal A.C."/>
            <person name="Nielsen M.L."/>
        </authorList>
    </citation>
    <scope>SUMOYLATION [LARGE SCALE ANALYSIS] AT LYS-55; LYS-171; LYS-202 AND LYS-251</scope>
    <scope>IDENTIFICATION BY MASS SPECTROMETRY [LARGE SCALE ANALYSIS]</scope>
</reference>
<sequence>MAVESGVISTLIPQDPPEQELILVKVEDNFSWDEKFKQNGSTQSCQELFRQQFRKFCYQETPGPREALSRLQELCYQWLMPELHTKEQILELLVLEQFLSILPEELQIWVQQHNPESGEEAVTLLEDLEREFDDPGQQVPASPQGPAVPWKDLTCLRASQESTDIHLQPLKTQLKSWKPCLSPKSDCENSETATKEGISEEKSQGLPQEPSFRGISEHESNLVWKQGSATGEKLRSPSQGGSFSQVIFTNKSLGKRDLYDEAERCLILTTDSIMCQKVPPEERPYRCDVCGHSFKQHSSLTQHQRIHTGEKPYKCNQCGKAFSLRSYLIIHQRIHSGEKAYECSECGKAFNQSSALIRHRKIHTGEKACKCNECGKAFSQSSYLIIHQRIHTGEKPYECNECGKTFSQSSKLIRHQRIHTGERPYECNECGKAFRQSSELITHQRIHSGEKPYECSECGKAFSLSSNLIRHQRIHSGEEPYQCNECGKTFKRSSALVQHQRIHSGDEAYICNECGKAFRHRSVLMRHQRVHTIK</sequence>
<name>ZN397_HUMAN</name>
<proteinExistence type="evidence at protein level"/>
<feature type="chain" id="PRO_0000047564" description="Zinc finger protein 397">
    <location>
        <begin position="1"/>
        <end position="534"/>
    </location>
</feature>
<feature type="domain" description="SCAN box" evidence="2">
    <location>
        <begin position="50"/>
        <end position="132"/>
    </location>
</feature>
<feature type="zinc finger region" description="C2H2-type 1" evidence="1">
    <location>
        <begin position="285"/>
        <end position="307"/>
    </location>
</feature>
<feature type="zinc finger region" description="C2H2-type 2" evidence="1">
    <location>
        <begin position="313"/>
        <end position="335"/>
    </location>
</feature>
<feature type="zinc finger region" description="C2H2-type 3" evidence="1">
    <location>
        <begin position="341"/>
        <end position="363"/>
    </location>
</feature>
<feature type="zinc finger region" description="C2H2-type 4" evidence="1">
    <location>
        <begin position="369"/>
        <end position="391"/>
    </location>
</feature>
<feature type="zinc finger region" description="C2H2-type 5" evidence="1">
    <location>
        <begin position="397"/>
        <end position="419"/>
    </location>
</feature>
<feature type="zinc finger region" description="C2H2-type 6" evidence="1">
    <location>
        <begin position="425"/>
        <end position="447"/>
    </location>
</feature>
<feature type="zinc finger region" description="C2H2-type 7" evidence="1">
    <location>
        <begin position="453"/>
        <end position="475"/>
    </location>
</feature>
<feature type="zinc finger region" description="C2H2-type 8" evidence="1">
    <location>
        <begin position="481"/>
        <end position="503"/>
    </location>
</feature>
<feature type="zinc finger region" description="C2H2-type 9" evidence="1">
    <location>
        <begin position="509"/>
        <end position="531"/>
    </location>
</feature>
<feature type="region of interest" description="Disordered" evidence="3">
    <location>
        <begin position="180"/>
        <end position="217"/>
    </location>
</feature>
<feature type="compositionally biased region" description="Basic and acidic residues" evidence="3">
    <location>
        <begin position="193"/>
        <end position="203"/>
    </location>
</feature>
<feature type="modified residue" description="Phosphoserine" evidence="8">
    <location>
        <position position="31"/>
    </location>
</feature>
<feature type="cross-link" description="Glycyl lysine isopeptide (Lys-Gly) (interchain with G-Cter in SUMO2)" evidence="10">
    <location>
        <position position="55"/>
    </location>
</feature>
<feature type="cross-link" description="Glycyl lysine isopeptide (Lys-Gly) (interchain with G-Cter in SUMO2)" evidence="9 10">
    <location>
        <position position="171"/>
    </location>
</feature>
<feature type="cross-link" description="Glycyl lysine isopeptide (Lys-Gly) (interchain with G-Cter in SUMO2)" evidence="10">
    <location>
        <position position="202"/>
    </location>
</feature>
<feature type="cross-link" description="Glycyl lysine isopeptide (Lys-Gly) (interchain with G-Cter in SUMO2)" evidence="10">
    <location>
        <position position="251"/>
    </location>
</feature>
<feature type="splice variant" id="VSP_042491" description="In isoform 3." evidence="5">
    <original>DCENSETATKEGISEEKSQGLP</original>
    <variation>GEEWEIIWKLLTLRPLFLRMQN</variation>
    <location>
        <begin position="186"/>
        <end position="207"/>
    </location>
</feature>
<feature type="splice variant" id="VSP_042492" description="In isoform 3." evidence="5">
    <location>
        <begin position="208"/>
        <end position="534"/>
    </location>
</feature>
<feature type="splice variant" id="VSP_006924" description="In isoform 2." evidence="6">
    <original>SEHESNLVWKQGSATGEKLRSPSQGGSFSQVIFTNKSLGKRDLYDEAERCLILTTDSIMC</original>
    <variation>KLSRPPKASSAIRWECVSPGSFPGDIIAAEATHSTISCFAINTLPATILPSKNVNRKYFS</variation>
    <location>
        <begin position="216"/>
        <end position="275"/>
    </location>
</feature>
<feature type="splice variant" id="VSP_006925" description="In isoform 2." evidence="6">
    <location>
        <begin position="276"/>
        <end position="534"/>
    </location>
</feature>
<dbReference type="EMBL" id="AF533250">
    <property type="protein sequence ID" value="AAM95991.2"/>
    <property type="molecule type" value="mRNA"/>
</dbReference>
<dbReference type="EMBL" id="AY157641">
    <property type="protein sequence ID" value="AAN65175.1"/>
    <property type="status" value="ALT_FRAME"/>
    <property type="molecule type" value="mRNA"/>
</dbReference>
<dbReference type="EMBL" id="BC006172">
    <property type="protein sequence ID" value="AAH06172.1"/>
    <property type="molecule type" value="mRNA"/>
</dbReference>
<dbReference type="CCDS" id="CCDS32814.1">
    <molecule id="Q8NF99-2"/>
</dbReference>
<dbReference type="CCDS" id="CCDS45852.1">
    <molecule id="Q8NF99-1"/>
</dbReference>
<dbReference type="RefSeq" id="NP_001128650.1">
    <molecule id="Q8NF99-1"/>
    <property type="nucleotide sequence ID" value="NM_001135178.3"/>
</dbReference>
<dbReference type="RefSeq" id="NP_115723.1">
    <molecule id="Q8NF99-2"/>
    <property type="nucleotide sequence ID" value="NM_032347.3"/>
</dbReference>
<dbReference type="RefSeq" id="XP_011524533.1">
    <molecule id="Q8NF99-1"/>
    <property type="nucleotide sequence ID" value="XM_011526231.3"/>
</dbReference>
<dbReference type="RefSeq" id="XP_016881531.1">
    <property type="nucleotide sequence ID" value="XM_017026042.1"/>
</dbReference>
<dbReference type="RefSeq" id="XP_047293844.1">
    <molecule id="Q8NF99-1"/>
    <property type="nucleotide sequence ID" value="XM_047437888.1"/>
</dbReference>
<dbReference type="RefSeq" id="XP_047293845.1">
    <molecule id="Q8NF99-1"/>
    <property type="nucleotide sequence ID" value="XM_047437889.1"/>
</dbReference>
<dbReference type="RefSeq" id="XP_054175247.1">
    <molecule id="Q8NF99-1"/>
    <property type="nucleotide sequence ID" value="XM_054319272.1"/>
</dbReference>
<dbReference type="RefSeq" id="XP_054175248.1">
    <molecule id="Q8NF99-1"/>
    <property type="nucleotide sequence ID" value="XM_054319273.1"/>
</dbReference>
<dbReference type="RefSeq" id="XP_054175249.1">
    <molecule id="Q8NF99-1"/>
    <property type="nucleotide sequence ID" value="XM_054319274.1"/>
</dbReference>
<dbReference type="SMR" id="Q8NF99"/>
<dbReference type="BioGRID" id="124033">
    <property type="interactions" value="65"/>
</dbReference>
<dbReference type="FunCoup" id="Q8NF99">
    <property type="interactions" value="1396"/>
</dbReference>
<dbReference type="IntAct" id="Q8NF99">
    <property type="interactions" value="59"/>
</dbReference>
<dbReference type="STRING" id="9606.ENSP00000331577"/>
<dbReference type="iPTMnet" id="Q8NF99"/>
<dbReference type="PhosphoSitePlus" id="Q8NF99"/>
<dbReference type="BioMuta" id="ZNF397"/>
<dbReference type="DMDM" id="38258943"/>
<dbReference type="jPOST" id="Q8NF99"/>
<dbReference type="MassIVE" id="Q8NF99"/>
<dbReference type="PaxDb" id="9606-ENSP00000331577"/>
<dbReference type="PeptideAtlas" id="Q8NF99"/>
<dbReference type="ProteomicsDB" id="73277">
    <molecule id="Q8NF99-1"/>
</dbReference>
<dbReference type="ProteomicsDB" id="73278">
    <molecule id="Q8NF99-2"/>
</dbReference>
<dbReference type="ProteomicsDB" id="73279">
    <molecule id="Q8NF99-3"/>
</dbReference>
<dbReference type="Antibodypedia" id="8557">
    <property type="antibodies" value="202 antibodies from 28 providers"/>
</dbReference>
<dbReference type="DNASU" id="84307"/>
<dbReference type="Ensembl" id="ENST00000261333.10">
    <molecule id="Q8NF99-2"/>
    <property type="protein sequence ID" value="ENSP00000261333.5"/>
    <property type="gene ID" value="ENSG00000186812.13"/>
</dbReference>
<dbReference type="Ensembl" id="ENST00000330501.12">
    <molecule id="Q8NF99-1"/>
    <property type="protein sequence ID" value="ENSP00000331577.6"/>
    <property type="gene ID" value="ENSG00000186812.13"/>
</dbReference>
<dbReference type="Ensembl" id="ENST00000585800.1">
    <molecule id="Q8NF99-3"/>
    <property type="protein sequence ID" value="ENSP00000466760.1"/>
    <property type="gene ID" value="ENSG00000186812.13"/>
</dbReference>
<dbReference type="Ensembl" id="ENST00000591206.5">
    <molecule id="Q8NF99-3"/>
    <property type="protein sequence ID" value="ENSP00000466317.1"/>
    <property type="gene ID" value="ENSG00000186812.13"/>
</dbReference>
<dbReference type="GeneID" id="84307"/>
<dbReference type="KEGG" id="hsa:84307"/>
<dbReference type="MANE-Select" id="ENST00000330501.12">
    <property type="protein sequence ID" value="ENSP00000331577.6"/>
    <property type="RefSeq nucleotide sequence ID" value="NM_001135178.3"/>
    <property type="RefSeq protein sequence ID" value="NP_001128650.1"/>
</dbReference>
<dbReference type="UCSC" id="uc002kyi.4">
    <molecule id="Q8NF99-1"/>
    <property type="organism name" value="human"/>
</dbReference>
<dbReference type="AGR" id="HGNC:18818"/>
<dbReference type="CTD" id="84307"/>
<dbReference type="GeneCards" id="ZNF397"/>
<dbReference type="HGNC" id="HGNC:18818">
    <property type="gene designation" value="ZNF397"/>
</dbReference>
<dbReference type="HPA" id="ENSG00000186812">
    <property type="expression patterns" value="Low tissue specificity"/>
</dbReference>
<dbReference type="MIM" id="609601">
    <property type="type" value="gene"/>
</dbReference>
<dbReference type="neXtProt" id="NX_Q8NF99"/>
<dbReference type="OpenTargets" id="ENSG00000186812"/>
<dbReference type="PharmGKB" id="PA38694"/>
<dbReference type="VEuPathDB" id="HostDB:ENSG00000186812"/>
<dbReference type="eggNOG" id="KOG1721">
    <property type="taxonomic scope" value="Eukaryota"/>
</dbReference>
<dbReference type="GeneTree" id="ENSGT00940000162078"/>
<dbReference type="HOGENOM" id="CLU_002678_49_3_1"/>
<dbReference type="InParanoid" id="Q8NF99"/>
<dbReference type="OMA" id="ESNLEWQ"/>
<dbReference type="OrthoDB" id="6365676at2759"/>
<dbReference type="PAN-GO" id="Q8NF99">
    <property type="GO annotations" value="3 GO annotations based on evolutionary models"/>
</dbReference>
<dbReference type="PhylomeDB" id="Q8NF99"/>
<dbReference type="TreeFam" id="TF338304"/>
<dbReference type="PathwayCommons" id="Q8NF99"/>
<dbReference type="SignaLink" id="Q8NF99"/>
<dbReference type="BioGRID-ORCS" id="84307">
    <property type="hits" value="10 hits in 1180 CRISPR screens"/>
</dbReference>
<dbReference type="ChiTaRS" id="ZNF397">
    <property type="organism name" value="human"/>
</dbReference>
<dbReference type="GenomeRNAi" id="84307"/>
<dbReference type="Pharos" id="Q8NF99">
    <property type="development level" value="Tbio"/>
</dbReference>
<dbReference type="PRO" id="PR:Q8NF99"/>
<dbReference type="Proteomes" id="UP000005640">
    <property type="component" value="Chromosome 18"/>
</dbReference>
<dbReference type="RNAct" id="Q8NF99">
    <property type="molecule type" value="protein"/>
</dbReference>
<dbReference type="Bgee" id="ENSG00000186812">
    <property type="expression patterns" value="Expressed in secondary oocyte and 183 other cell types or tissues"/>
</dbReference>
<dbReference type="ExpressionAtlas" id="Q8NF99">
    <property type="expression patterns" value="baseline and differential"/>
</dbReference>
<dbReference type="GO" id="GO:0005737">
    <property type="term" value="C:cytoplasm"/>
    <property type="evidence" value="ECO:0000314"/>
    <property type="project" value="UniProtKB"/>
</dbReference>
<dbReference type="GO" id="GO:0005829">
    <property type="term" value="C:cytosol"/>
    <property type="evidence" value="ECO:0000314"/>
    <property type="project" value="HPA"/>
</dbReference>
<dbReference type="GO" id="GO:0015630">
    <property type="term" value="C:microtubule cytoskeleton"/>
    <property type="evidence" value="ECO:0000314"/>
    <property type="project" value="HPA"/>
</dbReference>
<dbReference type="GO" id="GO:0005730">
    <property type="term" value="C:nucleolus"/>
    <property type="evidence" value="ECO:0000314"/>
    <property type="project" value="HPA"/>
</dbReference>
<dbReference type="GO" id="GO:0005634">
    <property type="term" value="C:nucleus"/>
    <property type="evidence" value="ECO:0000314"/>
    <property type="project" value="UniProtKB"/>
</dbReference>
<dbReference type="GO" id="GO:0005886">
    <property type="term" value="C:plasma membrane"/>
    <property type="evidence" value="ECO:0000314"/>
    <property type="project" value="HPA"/>
</dbReference>
<dbReference type="GO" id="GO:0000981">
    <property type="term" value="F:DNA-binding transcription factor activity, RNA polymerase II-specific"/>
    <property type="evidence" value="ECO:0000318"/>
    <property type="project" value="GO_Central"/>
</dbReference>
<dbReference type="GO" id="GO:0046982">
    <property type="term" value="F:protein heterodimerization activity"/>
    <property type="evidence" value="ECO:0000353"/>
    <property type="project" value="UniProtKB"/>
</dbReference>
<dbReference type="GO" id="GO:0042803">
    <property type="term" value="F:protein homodimerization activity"/>
    <property type="evidence" value="ECO:0000353"/>
    <property type="project" value="UniProtKB"/>
</dbReference>
<dbReference type="GO" id="GO:0000978">
    <property type="term" value="F:RNA polymerase II cis-regulatory region sequence-specific DNA binding"/>
    <property type="evidence" value="ECO:0000318"/>
    <property type="project" value="GO_Central"/>
</dbReference>
<dbReference type="GO" id="GO:0008270">
    <property type="term" value="F:zinc ion binding"/>
    <property type="evidence" value="ECO:0007669"/>
    <property type="project" value="UniProtKB-KW"/>
</dbReference>
<dbReference type="GO" id="GO:0045892">
    <property type="term" value="P:negative regulation of DNA-templated transcription"/>
    <property type="evidence" value="ECO:0000314"/>
    <property type="project" value="UniProtKB"/>
</dbReference>
<dbReference type="GO" id="GO:0006357">
    <property type="term" value="P:regulation of transcription by RNA polymerase II"/>
    <property type="evidence" value="ECO:0000318"/>
    <property type="project" value="GO_Central"/>
</dbReference>
<dbReference type="CDD" id="cd07936">
    <property type="entry name" value="SCAN"/>
    <property type="match status" value="1"/>
</dbReference>
<dbReference type="FunFam" id="3.30.160.60:FF:004137">
    <property type="match status" value="1"/>
</dbReference>
<dbReference type="FunFam" id="3.30.160.60:FF:000944">
    <property type="entry name" value="zinc finger protein 232 isoform X1"/>
    <property type="match status" value="1"/>
</dbReference>
<dbReference type="FunFam" id="3.30.160.60:FF:000622">
    <property type="entry name" value="zinc finger protein 26 isoform X3"/>
    <property type="match status" value="1"/>
</dbReference>
<dbReference type="FunFam" id="1.10.4020.10:FF:000001">
    <property type="entry name" value="zinc finger protein 263 isoform X1"/>
    <property type="match status" value="1"/>
</dbReference>
<dbReference type="FunFam" id="3.30.160.60:FF:002402">
    <property type="entry name" value="Zinc finger protein 347"/>
    <property type="match status" value="1"/>
</dbReference>
<dbReference type="FunFam" id="3.30.160.60:FF:001467">
    <property type="entry name" value="Zinc finger protein 397"/>
    <property type="match status" value="1"/>
</dbReference>
<dbReference type="FunFam" id="3.30.160.60:FF:001161">
    <property type="entry name" value="zinc finger protein 397 isoform X2"/>
    <property type="match status" value="1"/>
</dbReference>
<dbReference type="FunFam" id="3.30.160.60:FF:001498">
    <property type="entry name" value="Zinc finger protein 404"/>
    <property type="match status" value="1"/>
</dbReference>
<dbReference type="FunFam" id="3.30.160.60:FF:000737">
    <property type="entry name" value="Zinc finger protein 565"/>
    <property type="match status" value="1"/>
</dbReference>
<dbReference type="FunFam" id="3.30.160.60:FF:002134">
    <property type="entry name" value="Zinc finger protein 616"/>
    <property type="match status" value="1"/>
</dbReference>
<dbReference type="FunFam" id="3.30.160.60:FF:000229">
    <property type="entry name" value="Zinc finger protein 90 homolog"/>
    <property type="match status" value="1"/>
</dbReference>
<dbReference type="Gene3D" id="3.30.160.60">
    <property type="entry name" value="Classic Zinc Finger"/>
    <property type="match status" value="9"/>
</dbReference>
<dbReference type="Gene3D" id="1.10.4020.10">
    <property type="entry name" value="DNA breaking-rejoining enzymes"/>
    <property type="match status" value="1"/>
</dbReference>
<dbReference type="InterPro" id="IPR003309">
    <property type="entry name" value="SCAN_dom"/>
</dbReference>
<dbReference type="InterPro" id="IPR038269">
    <property type="entry name" value="SCAN_sf"/>
</dbReference>
<dbReference type="InterPro" id="IPR050758">
    <property type="entry name" value="Znf_C2H2-type"/>
</dbReference>
<dbReference type="InterPro" id="IPR036236">
    <property type="entry name" value="Znf_C2H2_sf"/>
</dbReference>
<dbReference type="InterPro" id="IPR013087">
    <property type="entry name" value="Znf_C2H2_type"/>
</dbReference>
<dbReference type="PANTHER" id="PTHR23234:SF8">
    <property type="entry name" value="C2H2-TYPE DOMAIN-CONTAINING PROTEIN"/>
    <property type="match status" value="1"/>
</dbReference>
<dbReference type="PANTHER" id="PTHR23234">
    <property type="entry name" value="ZNF44 PROTEIN"/>
    <property type="match status" value="1"/>
</dbReference>
<dbReference type="Pfam" id="PF02023">
    <property type="entry name" value="SCAN"/>
    <property type="match status" value="1"/>
</dbReference>
<dbReference type="Pfam" id="PF00096">
    <property type="entry name" value="zf-C2H2"/>
    <property type="match status" value="9"/>
</dbReference>
<dbReference type="SMART" id="SM00431">
    <property type="entry name" value="SCAN"/>
    <property type="match status" value="1"/>
</dbReference>
<dbReference type="SMART" id="SM00355">
    <property type="entry name" value="ZnF_C2H2"/>
    <property type="match status" value="9"/>
</dbReference>
<dbReference type="SUPFAM" id="SSF57667">
    <property type="entry name" value="beta-beta-alpha zinc fingers"/>
    <property type="match status" value="5"/>
</dbReference>
<dbReference type="SUPFAM" id="SSF47353">
    <property type="entry name" value="Retrovirus capsid dimerization domain-like"/>
    <property type="match status" value="1"/>
</dbReference>
<dbReference type="PROSITE" id="PS50804">
    <property type="entry name" value="SCAN_BOX"/>
    <property type="match status" value="1"/>
</dbReference>
<dbReference type="PROSITE" id="PS00028">
    <property type="entry name" value="ZINC_FINGER_C2H2_1"/>
    <property type="match status" value="9"/>
</dbReference>
<dbReference type="PROSITE" id="PS50157">
    <property type="entry name" value="ZINC_FINGER_C2H2_2"/>
    <property type="match status" value="9"/>
</dbReference>
<organism>
    <name type="scientific">Homo sapiens</name>
    <name type="common">Human</name>
    <dbReference type="NCBI Taxonomy" id="9606"/>
    <lineage>
        <taxon>Eukaryota</taxon>
        <taxon>Metazoa</taxon>
        <taxon>Chordata</taxon>
        <taxon>Craniata</taxon>
        <taxon>Vertebrata</taxon>
        <taxon>Euteleostomi</taxon>
        <taxon>Mammalia</taxon>
        <taxon>Eutheria</taxon>
        <taxon>Euarchontoglires</taxon>
        <taxon>Primates</taxon>
        <taxon>Haplorrhini</taxon>
        <taxon>Catarrhini</taxon>
        <taxon>Hominidae</taxon>
        <taxon>Homo</taxon>
    </lineage>
</organism>
<protein>
    <recommendedName>
        <fullName>Zinc finger protein 397</fullName>
    </recommendedName>
    <alternativeName>
        <fullName>Zinc finger and SCAN domain-containing protein 15</fullName>
    </alternativeName>
    <alternativeName>
        <fullName>Zinc finger protein 47</fullName>
    </alternativeName>
</protein>
<accession>Q8NF99</accession>
<accession>Q9BRM2</accession>
<evidence type="ECO:0000255" key="1">
    <source>
        <dbReference type="PROSITE-ProRule" id="PRU00042"/>
    </source>
</evidence>
<evidence type="ECO:0000255" key="2">
    <source>
        <dbReference type="PROSITE-ProRule" id="PRU00187"/>
    </source>
</evidence>
<evidence type="ECO:0000256" key="3">
    <source>
        <dbReference type="SAM" id="MobiDB-lite"/>
    </source>
</evidence>
<evidence type="ECO:0000269" key="4">
    <source>
    </source>
</evidence>
<evidence type="ECO:0000303" key="5">
    <source>
    </source>
</evidence>
<evidence type="ECO:0000303" key="6">
    <source>
    </source>
</evidence>
<evidence type="ECO:0000305" key="7"/>
<evidence type="ECO:0007744" key="8">
    <source>
    </source>
</evidence>
<evidence type="ECO:0007744" key="9">
    <source>
    </source>
</evidence>
<evidence type="ECO:0007744" key="10">
    <source>
    </source>
</evidence>
<keyword id="KW-0025">Alternative splicing</keyword>
<keyword id="KW-0963">Cytoplasm</keyword>
<keyword id="KW-0238">DNA-binding</keyword>
<keyword id="KW-1017">Isopeptide bond</keyword>
<keyword id="KW-0479">Metal-binding</keyword>
<keyword id="KW-0539">Nucleus</keyword>
<keyword id="KW-0597">Phosphoprotein</keyword>
<keyword id="KW-1267">Proteomics identification</keyword>
<keyword id="KW-1185">Reference proteome</keyword>
<keyword id="KW-0677">Repeat</keyword>
<keyword id="KW-0678">Repressor</keyword>
<keyword id="KW-0804">Transcription</keyword>
<keyword id="KW-0805">Transcription regulation</keyword>
<keyword id="KW-0832">Ubl conjugation</keyword>
<keyword id="KW-0862">Zinc</keyword>
<keyword id="KW-0863">Zinc-finger</keyword>
<comment type="function">
    <text evidence="4">Isoform 3 acts as a DNA-dependent transcriptional repressor.</text>
</comment>
<comment type="subunit">
    <text evidence="4">Isoforms 1 and 3 can both homo- and hetero-associate. Homo-association of isoform 1 is dependent on the presence of the SCAN domain.</text>
</comment>
<comment type="interaction">
    <interactant intactId="EBI-10213894">
        <id>Q8NF99</id>
    </interactant>
    <interactant intactId="EBI-2798728">
        <id>P61968</id>
        <label>LMO4</label>
    </interactant>
    <organismsDiffer>false</organismsDiffer>
    <experiments>3</experiments>
</comment>
<comment type="interaction">
    <interactant intactId="EBI-10213894">
        <id>Q8NF99</id>
    </interactant>
    <interactant intactId="EBI-1383852">
        <id>P54646</id>
        <label>PRKAA2</label>
    </interactant>
    <organismsDiffer>false</organismsDiffer>
    <experiments>3</experiments>
</comment>
<comment type="interaction">
    <interactant intactId="EBI-10213894">
        <id>Q8NF99</id>
    </interactant>
    <interactant intactId="EBI-745846">
        <id>P57086</id>
        <label>SCAND1</label>
    </interactant>
    <organismsDiffer>false</organismsDiffer>
    <experiments>4</experiments>
</comment>
<comment type="interaction">
    <interactant intactId="EBI-10213894">
        <id>Q8NF99</id>
    </interactant>
    <interactant intactId="EBI-720304">
        <id>Q86VK4</id>
        <label>ZNF410</label>
    </interactant>
    <organismsDiffer>false</organismsDiffer>
    <experiments>3</experiments>
</comment>
<comment type="interaction">
    <interactant intactId="EBI-10213894">
        <id>Q8NF99</id>
    </interactant>
    <interactant intactId="EBI-3925851">
        <id>Q9NWS9</id>
        <label>ZNF446</label>
    </interactant>
    <organismsDiffer>false</organismsDiffer>
    <experiments>7</experiments>
</comment>
<comment type="interaction">
    <interactant intactId="EBI-10213894">
        <id>Q8NF99</id>
    </interactant>
    <interactant intactId="EBI-740232">
        <id>Q9NWS9-2</id>
        <label>ZNF446</label>
    </interactant>
    <organismsDiffer>false</organismsDiffer>
    <experiments>5</experiments>
</comment>
<comment type="interaction">
    <interactant intactId="EBI-11524467">
        <id>Q8NF99-2</id>
    </interactant>
    <interactant intactId="EBI-745846">
        <id>P57086</id>
        <label>SCAND1</label>
    </interactant>
    <organismsDiffer>false</organismsDiffer>
    <experiments>4</experiments>
</comment>
<comment type="interaction">
    <interactant intactId="EBI-11524467">
        <id>Q8NF99-2</id>
    </interactant>
    <interactant intactId="EBI-16431094">
        <id>A0A0S2Z6X0</id>
        <label>ZKSCAN4</label>
    </interactant>
    <organismsDiffer>false</organismsDiffer>
    <experiments>4</experiments>
</comment>
<comment type="interaction">
    <interactant intactId="EBI-11524467">
        <id>Q8NF99-2</id>
    </interactant>
    <interactant intactId="EBI-2818641">
        <id>Q969J2</id>
        <label>ZKSCAN4</label>
    </interactant>
    <organismsDiffer>false</organismsDiffer>
    <experiments>3</experiments>
</comment>
<comment type="interaction">
    <interactant intactId="EBI-11524467">
        <id>Q8NF99-2</id>
    </interactant>
    <interactant intactId="EBI-740232">
        <id>Q9NWS9-2</id>
        <label>ZNF446</label>
    </interactant>
    <organismsDiffer>false</organismsDiffer>
    <experiments>5</experiments>
</comment>
<comment type="interaction">
    <interactant intactId="EBI-11524467">
        <id>Q8NF99-2</id>
    </interactant>
    <interactant intactId="EBI-1210440">
        <id>O43309</id>
        <label>ZSCAN12</label>
    </interactant>
    <organismsDiffer>false</organismsDiffer>
    <experiments>3</experiments>
</comment>
<comment type="interaction">
    <interactant intactId="EBI-11524467">
        <id>Q8NF99-2</id>
    </interactant>
    <interactant intactId="EBI-10178224">
        <id>P10073</id>
        <label>ZSCAN22</label>
    </interactant>
    <organismsDiffer>false</organismsDiffer>
    <experiments>3</experiments>
</comment>
<comment type="subcellular location">
    <molecule>Isoform 1</molecule>
    <subcellularLocation>
        <location>Nucleus</location>
    </subcellularLocation>
</comment>
<comment type="subcellular location">
    <molecule>Isoform 3</molecule>
    <subcellularLocation>
        <location>Nucleus</location>
    </subcellularLocation>
    <subcellularLocation>
        <location>Cytoplasm</location>
    </subcellularLocation>
</comment>
<comment type="alternative products">
    <event type="alternative splicing"/>
    <isoform>
        <id>Q8NF99-1</id>
        <name>1</name>
        <name>ZNF397-fu</name>
        <sequence type="displayed"/>
    </isoform>
    <isoform>
        <id>Q8NF99-2</id>
        <name>2</name>
        <sequence type="described" ref="VSP_006924 VSP_006925"/>
    </isoform>
    <isoform>
        <id>Q8NF99-3</id>
        <name>3</name>
        <name>Truncated</name>
        <name>ZNF397-nf</name>
        <sequence type="described" ref="VSP_042491 VSP_042492"/>
    </isoform>
</comment>
<comment type="tissue specificity">
    <text evidence="4">Expressed strongly in testis, moderately in skeletal muscle, pancreas and prostate, and weakly in heart, placenta, liver, kidney, spleen, thymus and small intestine.</text>
</comment>
<comment type="similarity">
    <text evidence="7">Belongs to the krueppel C2H2-type zinc-finger protein family.</text>
</comment>
<comment type="sequence caution" evidence="7">
    <molecule>Isoform 3</molecule>
    <conflict type="frameshift">
        <sequence resource="EMBL-CDS" id="AAN65175"/>
    </conflict>
</comment>